<feature type="chain" id="PRO_0000200467" description="Cytochrome b559 subunit beta">
    <location>
        <begin position="1"/>
        <end position="45"/>
    </location>
</feature>
<feature type="transmembrane region" description="Helical" evidence="1">
    <location>
        <begin position="20"/>
        <end position="36"/>
    </location>
</feature>
<feature type="binding site" description="axial binding residue" evidence="1">
    <location>
        <position position="24"/>
    </location>
    <ligand>
        <name>heme</name>
        <dbReference type="ChEBI" id="CHEBI:30413"/>
        <note>ligand shared with alpha subunit</note>
    </ligand>
    <ligandPart>
        <name>Fe</name>
        <dbReference type="ChEBI" id="CHEBI:18248"/>
    </ligandPart>
</feature>
<protein>
    <recommendedName>
        <fullName evidence="1">Cytochrome b559 subunit beta</fullName>
    </recommendedName>
    <alternativeName>
        <fullName evidence="1">PSII reaction center subunit VI</fullName>
    </alternativeName>
</protein>
<dbReference type="EMBL" id="BA000019">
    <property type="protein sequence ID" value="BAB75545.1"/>
    <property type="molecule type" value="Genomic_DNA"/>
</dbReference>
<dbReference type="PIR" id="AG2286">
    <property type="entry name" value="AG2286"/>
</dbReference>
<dbReference type="RefSeq" id="WP_010997987.1">
    <property type="nucleotide sequence ID" value="NZ_RSCN01000011.1"/>
</dbReference>
<dbReference type="STRING" id="103690.gene:10495888"/>
<dbReference type="KEGG" id="ana:asr3846"/>
<dbReference type="eggNOG" id="ENOG50332KX">
    <property type="taxonomic scope" value="Bacteria"/>
</dbReference>
<dbReference type="OrthoDB" id="532613at2"/>
<dbReference type="Proteomes" id="UP000002483">
    <property type="component" value="Chromosome"/>
</dbReference>
<dbReference type="GO" id="GO:0009539">
    <property type="term" value="C:photosystem II reaction center"/>
    <property type="evidence" value="ECO:0007669"/>
    <property type="project" value="InterPro"/>
</dbReference>
<dbReference type="GO" id="GO:0031676">
    <property type="term" value="C:plasma membrane-derived thylakoid membrane"/>
    <property type="evidence" value="ECO:0007669"/>
    <property type="project" value="UniProtKB-SubCell"/>
</dbReference>
<dbReference type="GO" id="GO:0009055">
    <property type="term" value="F:electron transfer activity"/>
    <property type="evidence" value="ECO:0007669"/>
    <property type="project" value="UniProtKB-UniRule"/>
</dbReference>
<dbReference type="GO" id="GO:0020037">
    <property type="term" value="F:heme binding"/>
    <property type="evidence" value="ECO:0007669"/>
    <property type="project" value="InterPro"/>
</dbReference>
<dbReference type="GO" id="GO:0005506">
    <property type="term" value="F:iron ion binding"/>
    <property type="evidence" value="ECO:0007669"/>
    <property type="project" value="UniProtKB-UniRule"/>
</dbReference>
<dbReference type="GO" id="GO:0009767">
    <property type="term" value="P:photosynthetic electron transport chain"/>
    <property type="evidence" value="ECO:0007669"/>
    <property type="project" value="InterPro"/>
</dbReference>
<dbReference type="HAMAP" id="MF_00643">
    <property type="entry name" value="PSII_PsbF"/>
    <property type="match status" value="1"/>
</dbReference>
<dbReference type="InterPro" id="IPR006241">
    <property type="entry name" value="PSII_cyt_b559_bsu"/>
</dbReference>
<dbReference type="InterPro" id="IPR006216">
    <property type="entry name" value="PSII_cyt_b559_CS"/>
</dbReference>
<dbReference type="InterPro" id="IPR013081">
    <property type="entry name" value="PSII_cyt_b559_N"/>
</dbReference>
<dbReference type="NCBIfam" id="TIGR01333">
    <property type="entry name" value="cyt_b559_beta"/>
    <property type="match status" value="1"/>
</dbReference>
<dbReference type="Pfam" id="PF00283">
    <property type="entry name" value="Cytochrom_B559"/>
    <property type="match status" value="1"/>
</dbReference>
<dbReference type="PIRSF" id="PIRSF000037">
    <property type="entry name" value="PsbF"/>
    <property type="match status" value="1"/>
</dbReference>
<dbReference type="SUPFAM" id="SSF161045">
    <property type="entry name" value="Cytochrome b559 subunits"/>
    <property type="match status" value="1"/>
</dbReference>
<dbReference type="PROSITE" id="PS00537">
    <property type="entry name" value="CYTOCHROME_B559"/>
    <property type="match status" value="1"/>
</dbReference>
<proteinExistence type="inferred from homology"/>
<comment type="function">
    <text evidence="1">This b-type cytochrome is tightly associated with the reaction center of photosystem II (PSII). PSII is a light-driven water:plastoquinone oxidoreductase that uses light energy to abstract electrons from H(2)O, generating O(2) and a proton gradient subsequently used for ATP formation. It consists of a core antenna complex that captures photons, and an electron transfer chain that converts photonic excitation into a charge separation.</text>
</comment>
<comment type="cofactor">
    <cofactor evidence="1">
        <name>heme b</name>
        <dbReference type="ChEBI" id="CHEBI:60344"/>
    </cofactor>
    <text evidence="1">With its partner (PsbE) binds heme. PSII binds additional chlorophylls, carotenoids and specific lipids.</text>
</comment>
<comment type="subunit">
    <text evidence="1">Heterodimer of an alpha subunit and a beta subunit. PSII is composed of 1 copy each of membrane proteins PsbA, PsbB, PsbC, PsbD, PsbE, PsbF, PsbH, PsbI, PsbJ, PsbK, PsbL, PsbM, PsbT, PsbX, PsbY, PsbZ, Psb30/Ycf12, peripheral proteins PsbO, CyanoQ (PsbQ), PsbU, PsbV and a large number of cofactors. It forms dimeric complexes.</text>
</comment>
<comment type="subcellular location">
    <subcellularLocation>
        <location evidence="1">Cellular thylakoid membrane</location>
        <topology evidence="1">Single-pass membrane protein</topology>
    </subcellularLocation>
</comment>
<comment type="similarity">
    <text evidence="1">Belongs to the PsbE/PsbF family.</text>
</comment>
<sequence>MTSGNNINQPVTYPIFTVRWIAVHTLAVPTVFFLGAIASMQFIQR</sequence>
<name>PSBF_NOSS1</name>
<gene>
    <name evidence="1" type="primary">psbF</name>
    <name type="ordered locus">asr3846</name>
</gene>
<evidence type="ECO:0000255" key="1">
    <source>
        <dbReference type="HAMAP-Rule" id="MF_00643"/>
    </source>
</evidence>
<accession>Q8YQI1</accession>
<organism>
    <name type="scientific">Nostoc sp. (strain PCC 7120 / SAG 25.82 / UTEX 2576)</name>
    <dbReference type="NCBI Taxonomy" id="103690"/>
    <lineage>
        <taxon>Bacteria</taxon>
        <taxon>Bacillati</taxon>
        <taxon>Cyanobacteriota</taxon>
        <taxon>Cyanophyceae</taxon>
        <taxon>Nostocales</taxon>
        <taxon>Nostocaceae</taxon>
        <taxon>Nostoc</taxon>
    </lineage>
</organism>
<reference key="1">
    <citation type="journal article" date="2001" name="DNA Res.">
        <title>Complete genomic sequence of the filamentous nitrogen-fixing cyanobacterium Anabaena sp. strain PCC 7120.</title>
        <authorList>
            <person name="Kaneko T."/>
            <person name="Nakamura Y."/>
            <person name="Wolk C.P."/>
            <person name="Kuritz T."/>
            <person name="Sasamoto S."/>
            <person name="Watanabe A."/>
            <person name="Iriguchi M."/>
            <person name="Ishikawa A."/>
            <person name="Kawashima K."/>
            <person name="Kimura T."/>
            <person name="Kishida Y."/>
            <person name="Kohara M."/>
            <person name="Matsumoto M."/>
            <person name="Matsuno A."/>
            <person name="Muraki A."/>
            <person name="Nakazaki N."/>
            <person name="Shimpo S."/>
            <person name="Sugimoto M."/>
            <person name="Takazawa M."/>
            <person name="Yamada M."/>
            <person name="Yasuda M."/>
            <person name="Tabata S."/>
        </authorList>
    </citation>
    <scope>NUCLEOTIDE SEQUENCE [LARGE SCALE GENOMIC DNA]</scope>
    <source>
        <strain>PCC 7120 / SAG 25.82 / UTEX 2576</strain>
    </source>
</reference>
<keyword id="KW-0249">Electron transport</keyword>
<keyword id="KW-0349">Heme</keyword>
<keyword id="KW-0408">Iron</keyword>
<keyword id="KW-0472">Membrane</keyword>
<keyword id="KW-0479">Metal-binding</keyword>
<keyword id="KW-0602">Photosynthesis</keyword>
<keyword id="KW-0604">Photosystem II</keyword>
<keyword id="KW-1185">Reference proteome</keyword>
<keyword id="KW-0793">Thylakoid</keyword>
<keyword id="KW-0812">Transmembrane</keyword>
<keyword id="KW-1133">Transmembrane helix</keyword>
<keyword id="KW-0813">Transport</keyword>